<organism>
    <name type="scientific">Xanthomonas oryzae pv. oryzae (strain MAFF 311018)</name>
    <dbReference type="NCBI Taxonomy" id="342109"/>
    <lineage>
        <taxon>Bacteria</taxon>
        <taxon>Pseudomonadati</taxon>
        <taxon>Pseudomonadota</taxon>
        <taxon>Gammaproteobacteria</taxon>
        <taxon>Lysobacterales</taxon>
        <taxon>Lysobacteraceae</taxon>
        <taxon>Xanthomonas</taxon>
    </lineage>
</organism>
<gene>
    <name evidence="1" type="primary">pqqE</name>
    <name type="ordered locus">XOO1633</name>
</gene>
<feature type="chain" id="PRO_1000061919" description="PqqA peptide cyclase">
    <location>
        <begin position="1"/>
        <end position="372"/>
    </location>
</feature>
<feature type="domain" description="Radical SAM core" evidence="2">
    <location>
        <begin position="4"/>
        <end position="219"/>
    </location>
</feature>
<feature type="region of interest" description="Disordered" evidence="3">
    <location>
        <begin position="342"/>
        <end position="372"/>
    </location>
</feature>
<feature type="binding site" evidence="1">
    <location>
        <position position="18"/>
    </location>
    <ligand>
        <name>[4Fe-4S] cluster</name>
        <dbReference type="ChEBI" id="CHEBI:49883"/>
        <note>4Fe-4S-S-AdoMet</note>
    </ligand>
</feature>
<feature type="binding site" evidence="1">
    <location>
        <position position="22"/>
    </location>
    <ligand>
        <name>[4Fe-4S] cluster</name>
        <dbReference type="ChEBI" id="CHEBI:49883"/>
        <note>4Fe-4S-S-AdoMet</note>
    </ligand>
</feature>
<feature type="binding site" evidence="1">
    <location>
        <position position="25"/>
    </location>
    <ligand>
        <name>[4Fe-4S] cluster</name>
        <dbReference type="ChEBI" id="CHEBI:49883"/>
        <note>4Fe-4S-S-AdoMet</note>
    </ligand>
</feature>
<sequence>MTTAPPPLSVLLELTHRCPLACPYCSNPIALAALREEMDTAGWRSLLEQAAEMGVLQAHFSGGEPMLRKDLPELVAHARTLGLYSNLITSGVAGGEPMLDQLQAAGLEHVQLSVQDVDPAGADRIAGYRNSLPKKRDFAAAVRARGLPLTINAVLHRHNAERVPGMIALALEWQAERIEVAHTQYYGWGLRNRAALMPSREQLMATIDAVDTARRELGDSLAIDFVTPDYYARQPKPCMGGWGQRFVNISPRGDVLPCHAAETIEGMRFDNLRERALADIWNNGEAFVRFRGTAWMPEVCQGCPKREIDWGGCRCQALALSGNAATLDPVCERSPAHAQVRATAEREAAAPAPEFIYRRPERPAPATADTLE</sequence>
<keyword id="KW-0004">4Fe-4S</keyword>
<keyword id="KW-0408">Iron</keyword>
<keyword id="KW-0411">Iron-sulfur</keyword>
<keyword id="KW-0479">Metal-binding</keyword>
<keyword id="KW-0560">Oxidoreductase</keyword>
<keyword id="KW-0884">PQQ biosynthesis</keyword>
<keyword id="KW-0949">S-adenosyl-L-methionine</keyword>
<proteinExistence type="inferred from homology"/>
<dbReference type="EC" id="1.21.98.4" evidence="1"/>
<dbReference type="EMBL" id="AP008229">
    <property type="protein sequence ID" value="BAE68388.1"/>
    <property type="molecule type" value="Genomic_DNA"/>
</dbReference>
<dbReference type="RefSeq" id="WP_011408172.1">
    <property type="nucleotide sequence ID" value="NC_007705.1"/>
</dbReference>
<dbReference type="SMR" id="Q2P4Y9"/>
<dbReference type="KEGG" id="xom:XOO1633"/>
<dbReference type="HOGENOM" id="CLU_009273_4_7_6"/>
<dbReference type="UniPathway" id="UPA00539"/>
<dbReference type="GO" id="GO:0051539">
    <property type="term" value="F:4 iron, 4 sulfur cluster binding"/>
    <property type="evidence" value="ECO:0007669"/>
    <property type="project" value="UniProtKB-KW"/>
</dbReference>
<dbReference type="GO" id="GO:0009975">
    <property type="term" value="F:cyclase activity"/>
    <property type="evidence" value="ECO:0007669"/>
    <property type="project" value="UniProtKB-UniRule"/>
</dbReference>
<dbReference type="GO" id="GO:0005506">
    <property type="term" value="F:iron ion binding"/>
    <property type="evidence" value="ECO:0007669"/>
    <property type="project" value="UniProtKB-UniRule"/>
</dbReference>
<dbReference type="GO" id="GO:0016491">
    <property type="term" value="F:oxidoreductase activity"/>
    <property type="evidence" value="ECO:0007669"/>
    <property type="project" value="UniProtKB-KW"/>
</dbReference>
<dbReference type="GO" id="GO:1904047">
    <property type="term" value="F:S-adenosyl-L-methionine binding"/>
    <property type="evidence" value="ECO:0007669"/>
    <property type="project" value="UniProtKB-UniRule"/>
</dbReference>
<dbReference type="GO" id="GO:0018189">
    <property type="term" value="P:pyrroloquinoline quinone biosynthetic process"/>
    <property type="evidence" value="ECO:0007669"/>
    <property type="project" value="UniProtKB-UniRule"/>
</dbReference>
<dbReference type="CDD" id="cd01335">
    <property type="entry name" value="Radical_SAM"/>
    <property type="match status" value="1"/>
</dbReference>
<dbReference type="CDD" id="cd21119">
    <property type="entry name" value="SPASM_PqqE"/>
    <property type="match status" value="1"/>
</dbReference>
<dbReference type="Gene3D" id="3.20.20.70">
    <property type="entry name" value="Aldolase class I"/>
    <property type="match status" value="1"/>
</dbReference>
<dbReference type="HAMAP" id="MF_00660">
    <property type="entry name" value="PqqE"/>
    <property type="match status" value="1"/>
</dbReference>
<dbReference type="InterPro" id="IPR023885">
    <property type="entry name" value="4Fe4S-binding_SPASM_dom"/>
</dbReference>
<dbReference type="InterPro" id="IPR013785">
    <property type="entry name" value="Aldolase_TIM"/>
</dbReference>
<dbReference type="InterPro" id="IPR011843">
    <property type="entry name" value="PQQ_synth_PqqE_bac"/>
</dbReference>
<dbReference type="InterPro" id="IPR017200">
    <property type="entry name" value="PqqE-like"/>
</dbReference>
<dbReference type="InterPro" id="IPR050377">
    <property type="entry name" value="Radical_SAM_PqqE_MftC-like"/>
</dbReference>
<dbReference type="InterPro" id="IPR007197">
    <property type="entry name" value="rSAM"/>
</dbReference>
<dbReference type="NCBIfam" id="TIGR02109">
    <property type="entry name" value="PQQ_syn_pqqE"/>
    <property type="match status" value="1"/>
</dbReference>
<dbReference type="NCBIfam" id="TIGR04085">
    <property type="entry name" value="rSAM_more_4Fe4S"/>
    <property type="match status" value="1"/>
</dbReference>
<dbReference type="PANTHER" id="PTHR11228:SF7">
    <property type="entry name" value="PQQA PEPTIDE CYCLASE"/>
    <property type="match status" value="1"/>
</dbReference>
<dbReference type="PANTHER" id="PTHR11228">
    <property type="entry name" value="RADICAL SAM DOMAIN PROTEIN"/>
    <property type="match status" value="1"/>
</dbReference>
<dbReference type="Pfam" id="PF04055">
    <property type="entry name" value="Radical_SAM"/>
    <property type="match status" value="1"/>
</dbReference>
<dbReference type="Pfam" id="PF13186">
    <property type="entry name" value="SPASM"/>
    <property type="match status" value="1"/>
</dbReference>
<dbReference type="PIRSF" id="PIRSF037420">
    <property type="entry name" value="PQQ_syn_pqqE"/>
    <property type="match status" value="1"/>
</dbReference>
<dbReference type="SFLD" id="SFLDF00280">
    <property type="entry name" value="coenzyme_PQQ_synthesis_protein"/>
    <property type="match status" value="1"/>
</dbReference>
<dbReference type="SFLD" id="SFLDS00029">
    <property type="entry name" value="Radical_SAM"/>
    <property type="match status" value="1"/>
</dbReference>
<dbReference type="SUPFAM" id="SSF102114">
    <property type="entry name" value="Radical SAM enzymes"/>
    <property type="match status" value="1"/>
</dbReference>
<dbReference type="PROSITE" id="PS51918">
    <property type="entry name" value="RADICAL_SAM"/>
    <property type="match status" value="1"/>
</dbReference>
<accession>Q2P4Y9</accession>
<evidence type="ECO:0000255" key="1">
    <source>
        <dbReference type="HAMAP-Rule" id="MF_00660"/>
    </source>
</evidence>
<evidence type="ECO:0000255" key="2">
    <source>
        <dbReference type="PROSITE-ProRule" id="PRU01266"/>
    </source>
</evidence>
<evidence type="ECO:0000256" key="3">
    <source>
        <dbReference type="SAM" id="MobiDB-lite"/>
    </source>
</evidence>
<reference key="1">
    <citation type="journal article" date="2005" name="Jpn. Agric. Res. Q.">
        <title>Genome sequence of Xanthomonas oryzae pv. oryzae suggests contribution of large numbers of effector genes and insertion sequences to its race diversity.</title>
        <authorList>
            <person name="Ochiai H."/>
            <person name="Inoue Y."/>
            <person name="Takeya M."/>
            <person name="Sasaki A."/>
            <person name="Kaku H."/>
        </authorList>
    </citation>
    <scope>NUCLEOTIDE SEQUENCE [LARGE SCALE GENOMIC DNA]</scope>
    <source>
        <strain>MAFF 311018</strain>
    </source>
</reference>
<comment type="function">
    <text evidence="1">Catalyzes the cross-linking of a glutamate residue and a tyrosine residue in the PqqA protein as part of the biosynthesis of pyrroloquinoline quinone (PQQ).</text>
</comment>
<comment type="catalytic activity">
    <reaction evidence="1">
        <text>[PQQ precursor protein] + S-adenosyl-L-methionine = E-Y cross-linked-[PQQ precursor protein] + 5'-deoxyadenosine + L-methionine + H(+)</text>
        <dbReference type="Rhea" id="RHEA:56836"/>
        <dbReference type="Rhea" id="RHEA-COMP:14800"/>
        <dbReference type="Rhea" id="RHEA-COMP:14801"/>
        <dbReference type="ChEBI" id="CHEBI:15378"/>
        <dbReference type="ChEBI" id="CHEBI:17319"/>
        <dbReference type="ChEBI" id="CHEBI:57844"/>
        <dbReference type="ChEBI" id="CHEBI:59789"/>
        <dbReference type="ChEBI" id="CHEBI:141026"/>
        <dbReference type="ChEBI" id="CHEBI:141027"/>
        <dbReference type="EC" id="1.21.98.4"/>
    </reaction>
</comment>
<comment type="cofactor">
    <cofactor evidence="1">
        <name>[4Fe-4S] cluster</name>
        <dbReference type="ChEBI" id="CHEBI:49883"/>
    </cofactor>
    <text evidence="1">Binds 1 [4Fe-4S] cluster. The cluster is coordinated with 3 cysteines and an exchangeable S-adenosyl-L-methionine.</text>
</comment>
<comment type="pathway">
    <text evidence="1">Cofactor biosynthesis; pyrroloquinoline quinone biosynthesis.</text>
</comment>
<comment type="subunit">
    <text evidence="1">Interacts with PqqD. The interaction is necessary for activity of PqqE.</text>
</comment>
<comment type="similarity">
    <text evidence="1">Belongs to the radical SAM superfamily. PqqE family.</text>
</comment>
<protein>
    <recommendedName>
        <fullName evidence="1">PqqA peptide cyclase</fullName>
        <ecNumber evidence="1">1.21.98.4</ecNumber>
    </recommendedName>
    <alternativeName>
        <fullName evidence="1">Coenzyme PQQ synthesis protein E</fullName>
    </alternativeName>
    <alternativeName>
        <fullName evidence="1">Pyrroloquinoline quinone biosynthesis protein E</fullName>
    </alternativeName>
</protein>
<name>PQQE_XANOM</name>